<name>PDUQ_SALTY</name>
<reference key="1">
    <citation type="journal article" date="1999" name="J. Bacteriol.">
        <title>The propanediol utilization (pdu) operon of Salmonella enterica serovar typhimurium LT2 includes genes necessary for formation of polyhedral organelles involved in coenzyme B(12)-dependent 1, 2-propanediol degradation.</title>
        <authorList>
            <person name="Bobik T.A."/>
            <person name="Havemann G.D."/>
            <person name="Busch R.J."/>
            <person name="Williams D.S."/>
            <person name="Aldrich H.C."/>
        </authorList>
    </citation>
    <scope>NUCLEOTIDE SEQUENCE [GENOMIC DNA]</scope>
    <scope>PATHWAY</scope>
    <scope>INDUCTION</scope>
    <source>
        <strain>LT2</strain>
    </source>
</reference>
<reference key="2">
    <citation type="journal article" date="2001" name="Nature">
        <title>Complete genome sequence of Salmonella enterica serovar Typhimurium LT2.</title>
        <authorList>
            <person name="McClelland M."/>
            <person name="Sanderson K.E."/>
            <person name="Spieth J."/>
            <person name="Clifton S.W."/>
            <person name="Latreille P."/>
            <person name="Courtney L."/>
            <person name="Porwollik S."/>
            <person name="Ali J."/>
            <person name="Dante M."/>
            <person name="Du F."/>
            <person name="Hou S."/>
            <person name="Layman D."/>
            <person name="Leonard S."/>
            <person name="Nguyen C."/>
            <person name="Scott K."/>
            <person name="Holmes A."/>
            <person name="Grewal N."/>
            <person name="Mulvaney E."/>
            <person name="Ryan E."/>
            <person name="Sun H."/>
            <person name="Florea L."/>
            <person name="Miller W."/>
            <person name="Stoneking T."/>
            <person name="Nhan M."/>
            <person name="Waterston R."/>
            <person name="Wilson R.K."/>
        </authorList>
    </citation>
    <scope>NUCLEOTIDE SEQUENCE [LARGE SCALE GENOMIC DNA]</scope>
    <source>
        <strain>LT2 / SGSC1412 / ATCC 700720</strain>
    </source>
</reference>
<reference key="3">
    <citation type="journal article" date="2012" name="PLoS ONE">
        <title>The PduQ enzyme is an alcohol dehydrogenase used to recycle NAD+ internally within the Pdu microcompartment of Salmonella enterica.</title>
        <authorList>
            <person name="Cheng S."/>
            <person name="Fan C."/>
            <person name="Sinha S."/>
            <person name="Bobik T.A."/>
        </authorList>
    </citation>
    <scope>PROTEIN SEQUENCE OF 1-9; 272-278 AND 337-351</scope>
    <scope>FUNCTION</scope>
    <scope>CATALYTIC ACTIVITY</scope>
    <scope>COFACTOR</scope>
    <scope>ACTIVITY REGULATION</scope>
    <scope>BIOPHYSICOCHEMICAL PROPERTIES</scope>
    <scope>INTERACTION WITH PDUP</scope>
    <scope>SUBCELLULAR LOCATION</scope>
    <scope>DISRUPTION PHENOTYPE</scope>
    <source>
        <strain>LT2</strain>
    </source>
</reference>
<reference key="4">
    <citation type="journal article" date="2003" name="J. Bacteriol.">
        <title>Protein content of polyhedral organelles involved in coenzyme B12-dependent degradation of 1,2-propanediol in Salmonella enterica serovar Typhimurium LT2.</title>
        <authorList>
            <person name="Havemann G.D."/>
            <person name="Bobik T.A."/>
        </authorList>
    </citation>
    <scope>BACTERIAL MICROCOMPARTMENT ABUNDANCE</scope>
    <source>
        <strain>LT2</strain>
    </source>
</reference>
<reference key="5">
    <citation type="journal article" date="2017" name="PLoS Comput. Biol.">
        <title>A systems-level model reveals that 1,2-Propanediol utilization microcompartments enhance pathway flux through intermediate sequestration.</title>
        <authorList>
            <person name="Jakobson C.M."/>
            <person name="Tullman-Ercek D."/>
            <person name="Slininger M.F."/>
            <person name="Mangan N.M."/>
        </authorList>
    </citation>
    <scope>SYSTEM-MODELING</scope>
    <scope>FUNCTION</scope>
    <source>
        <strain>LT2</strain>
    </source>
</reference>
<gene>
    <name evidence="4" type="primary">pduQ</name>
    <name type="ordered locus">STM2052</name>
</gene>
<sequence length="370" mass="39470">MNTFSLQTRLYSGQGSLAVLKRFTNKHIWIICDGFLAHSPLLDTLRNALPADNRISVFSEITPDPTIHTVVQGIAQMQALQPQVVIGFGGGSAMDAAKAIVWFSQQSGINIETCVAIPTTSGTGSEVTSACVISDPDKGIKYPLFNNALYPDMAILDPELVVSVPPQITANTGMDVLTHALEAWVSPRASDFTDALAEKAAKLVFQYLPTAVEKGDCVATRGKMHNASTLAGMAFSQAGLGLNHAIAHQLGGQFHLPHGLANALLLTTVIRFNAGVPRAAKRYARLAKACGFCPAEANDIAAINALIQQIELLKQRCVLPSLAVALKEGRSDFSARIPAMVQAALADVTLRTNPRPANAEAIRELLEELL</sequence>
<comment type="function">
    <text evidence="3">An iron-dependent alcohol dehydrogenase required for optimal 1,2-propanediol (1,2-PD) degradation. NAD(+) and NADH are regenerated internally within the bacterial microcompartment (BMC) dedicated to 1,2-PD degradation by the PduP and PduQ enzymes, which reduce NAD(+) and oxidize NADH respectively, although there must also be cofactor transport across the BMC.</text>
</comment>
<comment type="function">
    <text evidence="8">The 1,2-PD-specific bacterial microcompartment (BMC) concentrates low levels of 1,2-PD catabolic enzymes, concentrates volatile reaction intermediates thus enhancing pathway flux and keeps the level of toxic, mutagenic propionaldehyde low.</text>
</comment>
<comment type="catalytic activity">
    <reaction evidence="3">
        <text>1-propanol + NAD(+) = propanal + NADH + H(+)</text>
        <dbReference type="Rhea" id="RHEA:50704"/>
        <dbReference type="ChEBI" id="CHEBI:15378"/>
        <dbReference type="ChEBI" id="CHEBI:17153"/>
        <dbReference type="ChEBI" id="CHEBI:28831"/>
        <dbReference type="ChEBI" id="CHEBI:57540"/>
        <dbReference type="ChEBI" id="CHEBI:57945"/>
    </reaction>
    <physiologicalReaction direction="left-to-right" evidence="3">
        <dbReference type="Rhea" id="RHEA:50705"/>
    </physiologicalReaction>
    <physiologicalReaction direction="right-to-left" evidence="3">
        <dbReference type="Rhea" id="RHEA:50706"/>
    </physiologicalReaction>
</comment>
<comment type="cofactor">
    <cofactor evidence="3">
        <name>Fe cation</name>
        <dbReference type="ChEBI" id="CHEBI:24875"/>
    </cofactor>
</comment>
<comment type="activity regulation">
    <text evidence="3">Enzyme is oxygen sensitive.</text>
</comment>
<comment type="biophysicochemical properties">
    <kinetics>
        <KM evidence="3">45.3 uM for NADH</KM>
        <KM evidence="3">16 mM for propanal</KM>
        <KM evidence="3">267.5 uM for NAD(+)</KM>
        <KM evidence="3">95.8 mM for 1-propanol</KM>
        <Vmax evidence="3">77.7 umol/min/mg enzyme for propanal</Vmax>
        <Vmax evidence="3">9.2 umol/min/mg enzyme for 1-propanol</Vmax>
    </kinetics>
    <phDependence>
        <text evidence="3">Optimum pH is 7.0 for propionaldehyde reduction and 9.0 for 1-propanol dehydrogenase.</text>
    </phDependence>
</comment>
<comment type="pathway">
    <text evidence="6">Polyol metabolism; 1,2-propanediol degradation.</text>
</comment>
<comment type="subunit">
    <text evidence="3">Interacts with PduP, probably via the N-terminus of PduQ.</text>
</comment>
<comment type="subcellular location">
    <subcellularLocation>
        <location evidence="2">Bacterial microcompartment</location>
    </subcellularLocation>
    <text evidence="7">Probably located inside the BMC shell.</text>
</comment>
<comment type="induction">
    <text evidence="1">BMC production is induced by growth on 1,2-PD vitamin B12 medium.</text>
</comment>
<comment type="disruption phenotype">
    <text evidence="2">Loss of NADH-dependent reduction of propionaldehyde in BMCs. BMCs appear to be normal, cells grow more slowly on 1,2-PD with limiting or saturating CN-B12.</text>
</comment>
<comment type="miscellaneous">
    <text evidence="1 2">Bacterial microcompartments (BMC) 100-200 nm in cross section are formed during aerobic growth on minimal 1,2-PD-B12 or anaerobic growth on 1,2-PD-tetrathionate medium, but not during aerobic growth on glucose, anerobic growth on glucose or pyruvate-tetrathionate (PubMed:10498708). BMCs can constitute up to 10% of total cell protein (PubMed:12923081).</text>
</comment>
<comment type="similarity">
    <text evidence="7">Belongs to the iron-containing alcohol dehydrogenase family.</text>
</comment>
<dbReference type="EC" id="1.1.-.-" evidence="3"/>
<dbReference type="EMBL" id="AF026270">
    <property type="protein sequence ID" value="AAD39016.1"/>
    <property type="molecule type" value="Genomic_DNA"/>
</dbReference>
<dbReference type="EMBL" id="AE006468">
    <property type="protein sequence ID" value="AAL20956.1"/>
    <property type="molecule type" value="Genomic_DNA"/>
</dbReference>
<dbReference type="RefSeq" id="NP_460997.1">
    <property type="nucleotide sequence ID" value="NC_003197.2"/>
</dbReference>
<dbReference type="RefSeq" id="WP_001091448.1">
    <property type="nucleotide sequence ID" value="NC_003197.2"/>
</dbReference>
<dbReference type="SMR" id="Q9XDN0"/>
<dbReference type="STRING" id="99287.STM2052"/>
<dbReference type="PaxDb" id="99287-STM2052"/>
<dbReference type="GeneID" id="1253573"/>
<dbReference type="KEGG" id="stm:STM2052"/>
<dbReference type="PATRIC" id="fig|99287.12.peg.2174"/>
<dbReference type="HOGENOM" id="CLU_007207_0_0_6"/>
<dbReference type="OMA" id="RHIWIIC"/>
<dbReference type="PhylomeDB" id="Q9XDN0"/>
<dbReference type="BioCyc" id="MetaCyc:STM2052-MONOMER"/>
<dbReference type="BioCyc" id="SENT99287:STM2052-MONOMER"/>
<dbReference type="UniPathway" id="UPA00621"/>
<dbReference type="Proteomes" id="UP000001014">
    <property type="component" value="Chromosome"/>
</dbReference>
<dbReference type="GO" id="GO:0031472">
    <property type="term" value="C:propanediol degradation polyhedral organelle"/>
    <property type="evidence" value="ECO:0000314"/>
    <property type="project" value="UniProtKB"/>
</dbReference>
<dbReference type="GO" id="GO:0004022">
    <property type="term" value="F:alcohol dehydrogenase (NAD+) activity"/>
    <property type="evidence" value="ECO:0000314"/>
    <property type="project" value="UniProtKB"/>
</dbReference>
<dbReference type="GO" id="GO:0005506">
    <property type="term" value="F:iron ion binding"/>
    <property type="evidence" value="ECO:0000314"/>
    <property type="project" value="UniProtKB"/>
</dbReference>
<dbReference type="GO" id="GO:0051144">
    <property type="term" value="P:propanediol catabolic process"/>
    <property type="evidence" value="ECO:0007669"/>
    <property type="project" value="UniProtKB-UniPathway"/>
</dbReference>
<dbReference type="CDD" id="cd08180">
    <property type="entry name" value="PDD"/>
    <property type="match status" value="1"/>
</dbReference>
<dbReference type="FunFam" id="3.40.50.1970:FF:000003">
    <property type="entry name" value="Alcohol dehydrogenase, iron-containing"/>
    <property type="match status" value="1"/>
</dbReference>
<dbReference type="FunFam" id="1.20.1090.10:FF:000001">
    <property type="entry name" value="Aldehyde-alcohol dehydrogenase"/>
    <property type="match status" value="1"/>
</dbReference>
<dbReference type="Gene3D" id="3.40.50.1970">
    <property type="match status" value="1"/>
</dbReference>
<dbReference type="Gene3D" id="1.20.1090.10">
    <property type="entry name" value="Dehydroquinate synthase-like - alpha domain"/>
    <property type="match status" value="1"/>
</dbReference>
<dbReference type="InterPro" id="IPR001670">
    <property type="entry name" value="ADH_Fe/GldA"/>
</dbReference>
<dbReference type="InterPro" id="IPR056798">
    <property type="entry name" value="ADH_Fe_C"/>
</dbReference>
<dbReference type="InterPro" id="IPR018211">
    <property type="entry name" value="ADH_Fe_CS"/>
</dbReference>
<dbReference type="InterPro" id="IPR039697">
    <property type="entry name" value="Alcohol_dehydrogenase_Fe"/>
</dbReference>
<dbReference type="PANTHER" id="PTHR11496">
    <property type="entry name" value="ALCOHOL DEHYDROGENASE"/>
    <property type="match status" value="1"/>
</dbReference>
<dbReference type="PANTHER" id="PTHR11496:SF83">
    <property type="entry name" value="HYDROXYACID-OXOACID TRANSHYDROGENASE, MITOCHONDRIAL"/>
    <property type="match status" value="1"/>
</dbReference>
<dbReference type="Pfam" id="PF25137">
    <property type="entry name" value="ADH_Fe_C"/>
    <property type="match status" value="1"/>
</dbReference>
<dbReference type="Pfam" id="PF00465">
    <property type="entry name" value="Fe-ADH"/>
    <property type="match status" value="1"/>
</dbReference>
<dbReference type="SUPFAM" id="SSF56796">
    <property type="entry name" value="Dehydroquinate synthase-like"/>
    <property type="match status" value="1"/>
</dbReference>
<dbReference type="PROSITE" id="PS00913">
    <property type="entry name" value="ADH_IRON_1"/>
    <property type="match status" value="1"/>
</dbReference>
<feature type="chain" id="PRO_0000454270" description="1-propanol dehydrogenase PduQ">
    <location>
        <begin position="1"/>
        <end position="370"/>
    </location>
</feature>
<accession>Q9XDN0</accession>
<accession>Q7BV75</accession>
<evidence type="ECO:0000269" key="1">
    <source>
    </source>
</evidence>
<evidence type="ECO:0000269" key="2">
    <source>
    </source>
</evidence>
<evidence type="ECO:0000269" key="3">
    <source>
    </source>
</evidence>
<evidence type="ECO:0000303" key="4">
    <source>
    </source>
</evidence>
<evidence type="ECO:0000303" key="5">
    <source>
    </source>
</evidence>
<evidence type="ECO:0000305" key="6">
    <source>
    </source>
</evidence>
<evidence type="ECO:0000305" key="7">
    <source>
    </source>
</evidence>
<evidence type="ECO:0000305" key="8">
    <source>
    </source>
</evidence>
<protein>
    <recommendedName>
        <fullName evidence="5">1-propanol dehydrogenase PduQ</fullName>
        <ecNumber evidence="3">1.1.-.-</ecNumber>
    </recommendedName>
    <alternativeName>
        <fullName>Propanediol utilization protein PduQ</fullName>
    </alternativeName>
</protein>
<keyword id="KW-1283">Bacterial microcompartment</keyword>
<keyword id="KW-0903">Direct protein sequencing</keyword>
<keyword id="KW-0408">Iron</keyword>
<keyword id="KW-0520">NAD</keyword>
<keyword id="KW-0560">Oxidoreductase</keyword>
<keyword id="KW-1185">Reference proteome</keyword>
<organism>
    <name type="scientific">Salmonella typhimurium (strain LT2 / SGSC1412 / ATCC 700720)</name>
    <dbReference type="NCBI Taxonomy" id="99287"/>
    <lineage>
        <taxon>Bacteria</taxon>
        <taxon>Pseudomonadati</taxon>
        <taxon>Pseudomonadota</taxon>
        <taxon>Gammaproteobacteria</taxon>
        <taxon>Enterobacterales</taxon>
        <taxon>Enterobacteriaceae</taxon>
        <taxon>Salmonella</taxon>
    </lineage>
</organism>
<proteinExistence type="evidence at protein level"/>